<sequence>MIPVAEFKQFTEQQPAFKVLKPWWDVLAEYLTVAMLMIGVFGCTLQVTQDKIICLPSHESRENISGAPCQQLLPQGISEQMGGLRELSGLKNNLDLQQYSFINQLCYETALHWYAKYFPYLVVIHTLIFMVCTSFWFKFPGTSSKIEHFISILGKCFDSPWTTRALSEVSGENHKGPASGRAMVTTVTTTGAGSGKVGEGEKEKVLIEPEKVVSEPPVVTLLDKKEGEQAKALFEKVKKFRVHVEEGDILYSMYIRQTVLKVCKFFAILVYNLIYVEKISFLVACRVETSEITGYASFCCNHTKAHLFSKLAFCYISFVCVYGITCLYTLYWLFHRPLKEYSFRSVREETGMNDIPDVKNDFAFMLHLIDQYDSLYSKRFAVFLSEVSESRLKQLNLNHEWTPEKLRQKLQRNMRGRLELSLCMLPGLPDTVFELSEVEALRLEAICDISFPPGLSQLVNLQELSLLHSPARLPFSSQIFLRDRLKVICVKFEELREVPLWVFGLRGLEELHLEGLFPPEMARGATLESLRELKQLKVLSLRSNAGKVPASVTDVAGHLQRLSLHNDGARLLALNSLKKLAVLRELELVACGLERIPHAIFSLGALQELDLKDNHLRSIEEILSFQHCRKLVTLRLWHNQIAYVPEHVRKLRSLEQLYLSHNKLETLPTQLGQCFGLRLLDLSHNGLRSLPPELGLLQSLQHLALSYNALESLPDELFFCHKLRTLLLGYNHLTQLSPDVAALQALSRLELKGNRLETLPEELGDCKGLKKSGLLVEDTLYEGLPAEVREKMEEE</sequence>
<keyword id="KW-1003">Cell membrane</keyword>
<keyword id="KW-1015">Disulfide bond</keyword>
<keyword id="KW-0256">Endoplasmic reticulum</keyword>
<keyword id="KW-0325">Glycoprotein</keyword>
<keyword id="KW-0407">Ion channel</keyword>
<keyword id="KW-0406">Ion transport</keyword>
<keyword id="KW-0433">Leucine-rich repeat</keyword>
<keyword id="KW-0458">Lysosome</keyword>
<keyword id="KW-0472">Membrane</keyword>
<keyword id="KW-1185">Reference proteome</keyword>
<keyword id="KW-0677">Repeat</keyword>
<keyword id="KW-0812">Transmembrane</keyword>
<keyword id="KW-1133">Transmembrane helix</keyword>
<keyword id="KW-0813">Transport</keyword>
<dbReference type="EMBL" id="AC123029">
    <property type="status" value="NOT_ANNOTATED_CDS"/>
    <property type="molecule type" value="Genomic_DNA"/>
</dbReference>
<dbReference type="EMBL" id="BC080783">
    <property type="protein sequence ID" value="AAH80783.1"/>
    <property type="molecule type" value="mRNA"/>
</dbReference>
<dbReference type="CCDS" id="CCDS22079.1"/>
<dbReference type="RefSeq" id="NP_082451.2">
    <property type="nucleotide sequence ID" value="NM_028175.2"/>
</dbReference>
<dbReference type="RefSeq" id="XP_006508969.1">
    <property type="nucleotide sequence ID" value="XM_006508906.4"/>
</dbReference>
<dbReference type="RefSeq" id="XP_006508970.1">
    <property type="nucleotide sequence ID" value="XM_006508907.3"/>
</dbReference>
<dbReference type="RefSeq" id="XP_011240388.1">
    <property type="nucleotide sequence ID" value="XM_011242086.4"/>
</dbReference>
<dbReference type="SMR" id="Q66JT1"/>
<dbReference type="FunCoup" id="Q66JT1">
    <property type="interactions" value="53"/>
</dbReference>
<dbReference type="STRING" id="10090.ENSMUSP00000052055"/>
<dbReference type="GlyCosmos" id="Q66JT1">
    <property type="glycosylation" value="2 sites, No reported glycans"/>
</dbReference>
<dbReference type="GlyGen" id="Q66JT1">
    <property type="glycosylation" value="2 sites"/>
</dbReference>
<dbReference type="iPTMnet" id="Q66JT1"/>
<dbReference type="PhosphoSitePlus" id="Q66JT1"/>
<dbReference type="PaxDb" id="10090-ENSMUSP00000052055"/>
<dbReference type="PeptideAtlas" id="Q66JT1"/>
<dbReference type="ProteomicsDB" id="290160"/>
<dbReference type="Pumba" id="Q66JT1"/>
<dbReference type="Antibodypedia" id="12282">
    <property type="antibodies" value="54 antibodies from 14 providers"/>
</dbReference>
<dbReference type="DNASU" id="72267"/>
<dbReference type="Ensembl" id="ENSMUST00000053035.7">
    <property type="protein sequence ID" value="ENSMUSP00000052055.7"/>
    <property type="gene ID" value="ENSMUSG00000046589.8"/>
</dbReference>
<dbReference type="GeneID" id="72267"/>
<dbReference type="KEGG" id="mmu:72267"/>
<dbReference type="UCSC" id="uc009kth.2">
    <property type="organism name" value="mouse"/>
</dbReference>
<dbReference type="AGR" id="MGI:1919517"/>
<dbReference type="CTD" id="80131"/>
<dbReference type="MGI" id="MGI:1919517">
    <property type="gene designation" value="Lrrc8e"/>
</dbReference>
<dbReference type="VEuPathDB" id="HostDB:ENSMUSG00000046589"/>
<dbReference type="eggNOG" id="KOG0619">
    <property type="taxonomic scope" value="Eukaryota"/>
</dbReference>
<dbReference type="GeneTree" id="ENSGT00940000159311"/>
<dbReference type="HOGENOM" id="CLU_019019_0_0_1"/>
<dbReference type="InParanoid" id="Q66JT1"/>
<dbReference type="OMA" id="MNDIPDV"/>
<dbReference type="OrthoDB" id="2021138at2759"/>
<dbReference type="PhylomeDB" id="Q66JT1"/>
<dbReference type="TreeFam" id="TF331443"/>
<dbReference type="Reactome" id="R-MMU-5223345">
    <property type="pathway name" value="Miscellaneous transport and binding events"/>
</dbReference>
<dbReference type="BioGRID-ORCS" id="72267">
    <property type="hits" value="2 hits in 80 CRISPR screens"/>
</dbReference>
<dbReference type="ChiTaRS" id="Lrrc8e">
    <property type="organism name" value="mouse"/>
</dbReference>
<dbReference type="PRO" id="PR:Q66JT1"/>
<dbReference type="Proteomes" id="UP000000589">
    <property type="component" value="Chromosome 8"/>
</dbReference>
<dbReference type="RNAct" id="Q66JT1">
    <property type="molecule type" value="protein"/>
</dbReference>
<dbReference type="Bgee" id="ENSMUSG00000046589">
    <property type="expression patterns" value="Expressed in primary oocyte and 75 other cell types or tissues"/>
</dbReference>
<dbReference type="ExpressionAtlas" id="Q66JT1">
    <property type="expression patterns" value="baseline and differential"/>
</dbReference>
<dbReference type="GO" id="GO:0005737">
    <property type="term" value="C:cytoplasm"/>
    <property type="evidence" value="ECO:0000250"/>
    <property type="project" value="UniProtKB"/>
</dbReference>
<dbReference type="GO" id="GO:0005789">
    <property type="term" value="C:endoplasmic reticulum membrane"/>
    <property type="evidence" value="ECO:0007669"/>
    <property type="project" value="UniProtKB-SubCell"/>
</dbReference>
<dbReference type="GO" id="GO:0005765">
    <property type="term" value="C:lysosomal membrane"/>
    <property type="evidence" value="ECO:0000250"/>
    <property type="project" value="UniProtKB"/>
</dbReference>
<dbReference type="GO" id="GO:0034702">
    <property type="term" value="C:monoatomic ion channel complex"/>
    <property type="evidence" value="ECO:0000250"/>
    <property type="project" value="UniProtKB"/>
</dbReference>
<dbReference type="GO" id="GO:0005886">
    <property type="term" value="C:plasma membrane"/>
    <property type="evidence" value="ECO:0000250"/>
    <property type="project" value="UniProtKB"/>
</dbReference>
<dbReference type="GO" id="GO:0005225">
    <property type="term" value="F:volume-sensitive anion channel activity"/>
    <property type="evidence" value="ECO:0007669"/>
    <property type="project" value="Ensembl"/>
</dbReference>
<dbReference type="GO" id="GO:0015810">
    <property type="term" value="P:aspartate transmembrane transport"/>
    <property type="evidence" value="ECO:0000250"/>
    <property type="project" value="UniProtKB"/>
</dbReference>
<dbReference type="GO" id="GO:0006884">
    <property type="term" value="P:cell volume homeostasis"/>
    <property type="evidence" value="ECO:0000250"/>
    <property type="project" value="UniProtKB"/>
</dbReference>
<dbReference type="GO" id="GO:0071470">
    <property type="term" value="P:cellular response to osmotic stress"/>
    <property type="evidence" value="ECO:0000250"/>
    <property type="project" value="UniProtKB"/>
</dbReference>
<dbReference type="GO" id="GO:0140361">
    <property type="term" value="P:cyclic-GMP-AMP transmembrane import across plasma membrane"/>
    <property type="evidence" value="ECO:0000315"/>
    <property type="project" value="UniProtKB"/>
</dbReference>
<dbReference type="GO" id="GO:0098656">
    <property type="term" value="P:monoatomic anion transmembrane transport"/>
    <property type="evidence" value="ECO:0000250"/>
    <property type="project" value="UniProtKB"/>
</dbReference>
<dbReference type="FunFam" id="3.80.10.10:FF:000747">
    <property type="entry name" value="volume-regulated anion channel subunit LRRC8E"/>
    <property type="match status" value="1"/>
</dbReference>
<dbReference type="FunFam" id="3.80.10.10:FF:001071">
    <property type="entry name" value="volume-regulated anion channel subunit LRRC8E"/>
    <property type="match status" value="1"/>
</dbReference>
<dbReference type="FunFam" id="3.80.10.10:FF:000907">
    <property type="entry name" value="Volume-regulated anion channel subunit LRRC8E isoform X1"/>
    <property type="match status" value="1"/>
</dbReference>
<dbReference type="Gene3D" id="3.80.10.10">
    <property type="entry name" value="Ribonuclease Inhibitor"/>
    <property type="match status" value="2"/>
</dbReference>
<dbReference type="InterPro" id="IPR001611">
    <property type="entry name" value="Leu-rich_rpt"/>
</dbReference>
<dbReference type="InterPro" id="IPR003591">
    <property type="entry name" value="Leu-rich_rpt_typical-subtyp"/>
</dbReference>
<dbReference type="InterPro" id="IPR032675">
    <property type="entry name" value="LRR_dom_sf"/>
</dbReference>
<dbReference type="InterPro" id="IPR050216">
    <property type="entry name" value="LRR_domain-containing"/>
</dbReference>
<dbReference type="InterPro" id="IPR021040">
    <property type="entry name" value="LRRC8_Pannexin-like"/>
</dbReference>
<dbReference type="PANTHER" id="PTHR48051">
    <property type="match status" value="1"/>
</dbReference>
<dbReference type="PANTHER" id="PTHR48051:SF36">
    <property type="entry name" value="CASPASE FAMILY P20 DOMAIN-CONTAINING PROTEIN"/>
    <property type="match status" value="1"/>
</dbReference>
<dbReference type="Pfam" id="PF13855">
    <property type="entry name" value="LRR_8"/>
    <property type="match status" value="2"/>
</dbReference>
<dbReference type="Pfam" id="PF12534">
    <property type="entry name" value="Pannexin_like"/>
    <property type="match status" value="1"/>
</dbReference>
<dbReference type="SMART" id="SM00364">
    <property type="entry name" value="LRR_BAC"/>
    <property type="match status" value="3"/>
</dbReference>
<dbReference type="SMART" id="SM00369">
    <property type="entry name" value="LRR_TYP"/>
    <property type="match status" value="7"/>
</dbReference>
<dbReference type="SUPFAM" id="SSF52058">
    <property type="entry name" value="L domain-like"/>
    <property type="match status" value="1"/>
</dbReference>
<dbReference type="PROSITE" id="PS51450">
    <property type="entry name" value="LRR"/>
    <property type="match status" value="8"/>
</dbReference>
<name>LRC8E_MOUSE</name>
<gene>
    <name evidence="7 11" type="primary">Lrrc8e</name>
</gene>
<proteinExistence type="evidence at protein level"/>
<reference key="1">
    <citation type="journal article" date="2009" name="PLoS Biol.">
        <title>Lineage-specific biology revealed by a finished genome assembly of the mouse.</title>
        <authorList>
            <person name="Church D.M."/>
            <person name="Goodstadt L."/>
            <person name="Hillier L.W."/>
            <person name="Zody M.C."/>
            <person name="Goldstein S."/>
            <person name="She X."/>
            <person name="Bult C.J."/>
            <person name="Agarwala R."/>
            <person name="Cherry J.L."/>
            <person name="DiCuccio M."/>
            <person name="Hlavina W."/>
            <person name="Kapustin Y."/>
            <person name="Meric P."/>
            <person name="Maglott D."/>
            <person name="Birtle Z."/>
            <person name="Marques A.C."/>
            <person name="Graves T."/>
            <person name="Zhou S."/>
            <person name="Teague B."/>
            <person name="Potamousis K."/>
            <person name="Churas C."/>
            <person name="Place M."/>
            <person name="Herschleb J."/>
            <person name="Runnheim R."/>
            <person name="Forrest D."/>
            <person name="Amos-Landgraf J."/>
            <person name="Schwartz D.C."/>
            <person name="Cheng Z."/>
            <person name="Lindblad-Toh K."/>
            <person name="Eichler E.E."/>
            <person name="Ponting C.P."/>
        </authorList>
    </citation>
    <scope>NUCLEOTIDE SEQUENCE [LARGE SCALE GENOMIC DNA]</scope>
    <source>
        <strain>C57BL/6J</strain>
    </source>
</reference>
<reference key="2">
    <citation type="journal article" date="2004" name="Genome Res.">
        <title>The status, quality, and expansion of the NIH full-length cDNA project: the Mammalian Gene Collection (MGC).</title>
        <authorList>
            <consortium name="The MGC Project Team"/>
        </authorList>
    </citation>
    <scope>NUCLEOTIDE SEQUENCE [LARGE SCALE MRNA]</scope>
    <source>
        <strain>C57BL/6J</strain>
    </source>
</reference>
<reference key="3">
    <citation type="journal article" date="2020" name="Immunity">
        <title>Transfer of cgamp into bystander cells via LRRC8 volume-regulated anion channels augments STING-mediated interferon responses and anti-viral immunity.</title>
        <authorList>
            <person name="Zhou C."/>
            <person name="Chen X."/>
            <person name="Planells-Cases R."/>
            <person name="Chu J."/>
            <person name="Wang L."/>
            <person name="Cao L."/>
            <person name="Li Z."/>
            <person name="Lopez-Cayuqueo K.I."/>
            <person name="Xie Y."/>
            <person name="Ye S."/>
            <person name="Wang X."/>
            <person name="Ullrich F."/>
            <person name="Ma S."/>
            <person name="Fang Y."/>
            <person name="Zhang X."/>
            <person name="Qian Z."/>
            <person name="Liang X."/>
            <person name="Cai S.Q."/>
            <person name="Jiang Z."/>
            <person name="Zhou D."/>
            <person name="Leng Q."/>
            <person name="Xiao T.S."/>
            <person name="Lan K."/>
            <person name="Yang J."/>
            <person name="Li H."/>
            <person name="Peng C."/>
            <person name="Qiu Z."/>
            <person name="Jentsch T.J."/>
            <person name="Xiao H."/>
        </authorList>
    </citation>
    <scope>FUNCTION</scope>
    <scope>TRANSPORTER ACTIVITY</scope>
    <scope>DISRUPTION PHENOTYPE</scope>
</reference>
<reference key="4">
    <citation type="journal article" date="2023" name="Nat. Struct. Mol. Biol.">
        <title>Structure of a volume-regulated heteromeric LRRC8A/C channel.</title>
        <authorList>
            <person name="Rutz S."/>
            <person name="Deneka D."/>
            <person name="Dittmann A."/>
            <person name="Sawicka M."/>
            <person name="Dutzler R."/>
        </authorList>
    </citation>
    <scope>FUNCTION</scope>
    <scope>TRANSPORTER ACTIVITY</scope>
    <scope>SUBUNIT</scope>
</reference>
<comment type="function">
    <text evidence="1 5 6">Non-essential component of the volume-regulated anion channel (VRAC, also named VSOAC channel), an anion channel required to maintain a constant cell volume in response to extracellular or intracellular osmotic changes (PubMed:36522427). The VRAC channel conducts iodide better than chloride and can also conduct organic osmolytes like taurine (By similarity). Mediates efflux of amino acids, such as aspartate, in response to osmotic stress (By similarity). The VRAC channel also mediates transport of immunoreactive cyclic dinucleotide GMP-AMP (2'-3'-cGAMP), an immune messenger produced in response to DNA virus in the cytosol (PubMed:32277911). Channel activity requires LRRC8A plus at least one other family member (LRRC8B, LRRC8C, LRRC8D or LRRC8E); channel characteristics depend on the precise subunit composition (PubMed:36522427). Also plays a role in lysosome homeostasis by forming functional lysosomal VRAC channels in response to low cytoplasmic ionic strength condition: lysosomal VRAC channels are necessary for the formation of large lysosome-derived vacuoles, which store and then expel excess water to maintain cytosolic water homeostasis (By similarity).</text>
</comment>
<comment type="catalytic activity">
    <reaction evidence="6">
        <text>chloride(in) = chloride(out)</text>
        <dbReference type="Rhea" id="RHEA:29823"/>
        <dbReference type="ChEBI" id="CHEBI:17996"/>
    </reaction>
</comment>
<comment type="catalytic activity">
    <reaction evidence="1">
        <text>iodide(out) = iodide(in)</text>
        <dbReference type="Rhea" id="RHEA:66324"/>
        <dbReference type="ChEBI" id="CHEBI:16382"/>
    </reaction>
</comment>
<comment type="catalytic activity">
    <reaction evidence="1">
        <text>taurine(out) = taurine(in)</text>
        <dbReference type="Rhea" id="RHEA:66328"/>
        <dbReference type="ChEBI" id="CHEBI:507393"/>
    </reaction>
</comment>
<comment type="catalytic activity">
    <reaction evidence="10">
        <text>2',3'-cGAMP(out) = 2',3'-cGAMP(in)</text>
        <dbReference type="Rhea" id="RHEA:66320"/>
        <dbReference type="ChEBI" id="CHEBI:143093"/>
    </reaction>
    <physiologicalReaction direction="left-to-right" evidence="10">
        <dbReference type="Rhea" id="RHEA:66321"/>
    </physiologicalReaction>
    <physiologicalReaction direction="right-to-left" evidence="10">
        <dbReference type="Rhea" id="RHEA:66322"/>
    </physiologicalReaction>
</comment>
<comment type="subunit">
    <text evidence="6">Heterohexamer; oligomerizes with other LRRC8 proteins (LRRC8A, LRRC8C, LRRC8D and/or LRRC8B) to form a heterohexamer (PubMed:36522427). In vivo, the subunit composition may depend primarily on expression levels, and heterooligomeric channels containing various proportions of the different LRRC8 proteins may coexist (PubMed:36522427).</text>
</comment>
<comment type="subcellular location">
    <subcellularLocation>
        <location evidence="1">Cell membrane</location>
        <topology evidence="1">Multi-pass membrane protein</topology>
    </subcellularLocation>
    <subcellularLocation>
        <location evidence="1">Endoplasmic reticulum membrane</location>
    </subcellularLocation>
    <subcellularLocation>
        <location evidence="1">Lysosome membrane</location>
        <topology evidence="1">Multi-pass membrane protein</topology>
    </subcellularLocation>
    <subcellularLocation>
        <location evidence="1">Endoplasmic reticulum membrane</location>
        <topology evidence="1">Multi-pass membrane protein</topology>
    </subcellularLocation>
    <text evidence="1">In the absence of LRRC8A, resides primarily in the endoplasmic reticulum. Requires LRRC8A for localization at the cell membrane or lysosome membrane.</text>
</comment>
<comment type="domain">
    <text evidence="3">The volume-regulated anion channel (VRAC) channel forms a trimer of dimers, with symmetry mismatch between the pore-forming domain and the cytosolic LRR repeats, a topology similar to gap junction proteins.</text>
</comment>
<comment type="disruption phenotype">
    <text evidence="5">No visible phenotype in normal conditions (PubMed:32277911). Impaired response to herpes simplex virus 1 (HSV-1) infection, caused by decreased ability to transport 2'-3'-cGAMP (PubMed:32277911).</text>
</comment>
<comment type="similarity">
    <text evidence="9">Belongs to the LRRC8 family.</text>
</comment>
<feature type="chain" id="PRO_0000076251" description="Volume-regulated anion channel subunit LRRC8E">
    <location>
        <begin position="1"/>
        <end position="795"/>
    </location>
</feature>
<feature type="topological domain" description="Cytoplasmic" evidence="9">
    <location>
        <begin position="1"/>
        <end position="22"/>
    </location>
</feature>
<feature type="transmembrane region" description="Helical; Name=1" evidence="4">
    <location>
        <begin position="23"/>
        <end position="43"/>
    </location>
</feature>
<feature type="topological domain" description="Extracellular" evidence="9">
    <location>
        <begin position="44"/>
        <end position="116"/>
    </location>
</feature>
<feature type="transmembrane region" description="Helical; Name=2" evidence="4">
    <location>
        <begin position="117"/>
        <end position="137"/>
    </location>
</feature>
<feature type="topological domain" description="Cytoplasmic" evidence="9">
    <location>
        <begin position="138"/>
        <end position="264"/>
    </location>
</feature>
<feature type="transmembrane region" description="Helical; Name=3" evidence="4">
    <location>
        <begin position="265"/>
        <end position="285"/>
    </location>
</feature>
<feature type="topological domain" description="Extracellular" evidence="9">
    <location>
        <begin position="286"/>
        <end position="312"/>
    </location>
</feature>
<feature type="transmembrane region" description="Helical; Name=4" evidence="4">
    <location>
        <begin position="313"/>
        <end position="333"/>
    </location>
</feature>
<feature type="topological domain" description="Cytoplasmic" evidence="9">
    <location>
        <begin position="334"/>
        <end position="795"/>
    </location>
</feature>
<feature type="repeat" description="LRR 1">
    <location>
        <begin position="535"/>
        <end position="556"/>
    </location>
</feature>
<feature type="repeat" description="LRR 2">
    <location>
        <begin position="558"/>
        <end position="578"/>
    </location>
</feature>
<feature type="repeat" description="LRR 3">
    <location>
        <begin position="582"/>
        <end position="603"/>
    </location>
</feature>
<feature type="repeat" description="LRR 4">
    <location>
        <begin position="605"/>
        <end position="626"/>
    </location>
</feature>
<feature type="repeat" description="LRR 5">
    <location>
        <begin position="630"/>
        <end position="651"/>
    </location>
</feature>
<feature type="repeat" description="LRR 6">
    <location>
        <begin position="653"/>
        <end position="674"/>
    </location>
</feature>
<feature type="repeat" description="LRR 7">
    <location>
        <begin position="676"/>
        <end position="697"/>
    </location>
</feature>
<feature type="repeat" description="LRR 8">
    <location>
        <begin position="699"/>
        <end position="720"/>
    </location>
</feature>
<feature type="repeat" description="LRR 9">
    <location>
        <begin position="722"/>
        <end position="744"/>
    </location>
</feature>
<feature type="repeat" description="LRR 10">
    <location>
        <begin position="745"/>
        <end position="766"/>
    </location>
</feature>
<feature type="glycosylation site" description="N-linked (GlcNAc...) asparagine" evidence="4">
    <location>
        <position position="63"/>
    </location>
</feature>
<feature type="glycosylation site" description="N-linked (GlcNAc...) asparagine" evidence="4">
    <location>
        <position position="301"/>
    </location>
</feature>
<feature type="disulfide bond" evidence="2">
    <location>
        <begin position="54"/>
        <end position="300"/>
    </location>
</feature>
<feature type="sequence conflict" description="In Ref. 2; AAH80783." evidence="9" ref="2">
    <original>V</original>
    <variation>M</variation>
    <location>
        <position position="33"/>
    </location>
</feature>
<feature type="sequence conflict" description="In Ref. 2; AAH80783." evidence="9" ref="2">
    <original>N</original>
    <variation>D</variation>
    <location>
        <position position="731"/>
    </location>
</feature>
<feature type="sequence conflict" description="In Ref. 2; AAH80783." evidence="9" ref="2">
    <original>E</original>
    <variation>G</variation>
    <location>
        <position position="750"/>
    </location>
</feature>
<feature type="sequence conflict" description="In Ref. 2; AAH80783." evidence="9" ref="2">
    <original>V</original>
    <variation>A</variation>
    <location>
        <position position="776"/>
    </location>
</feature>
<protein>
    <recommendedName>
        <fullName evidence="8">Volume-regulated anion channel subunit LRRC8E</fullName>
    </recommendedName>
    <alternativeName>
        <fullName evidence="7">Leucine-rich repeat-containing protein 8E</fullName>
    </alternativeName>
</protein>
<evidence type="ECO:0000250" key="1">
    <source>
        <dbReference type="UniProtKB" id="Q6NSJ5"/>
    </source>
</evidence>
<evidence type="ECO:0000250" key="2">
    <source>
        <dbReference type="UniProtKB" id="Q80WG5"/>
    </source>
</evidence>
<evidence type="ECO:0000250" key="3">
    <source>
        <dbReference type="UniProtKB" id="Q8IWT6"/>
    </source>
</evidence>
<evidence type="ECO:0000255" key="4"/>
<evidence type="ECO:0000269" key="5">
    <source>
    </source>
</evidence>
<evidence type="ECO:0000269" key="6">
    <source>
    </source>
</evidence>
<evidence type="ECO:0000303" key="7">
    <source>
    </source>
</evidence>
<evidence type="ECO:0000303" key="8">
    <source>
    </source>
</evidence>
<evidence type="ECO:0000305" key="9"/>
<evidence type="ECO:0000305" key="10">
    <source>
    </source>
</evidence>
<evidence type="ECO:0000312" key="11">
    <source>
        <dbReference type="MGI" id="MGI:1919517"/>
    </source>
</evidence>
<accession>Q66JT1</accession>
<accession>E9QNV5</accession>
<organism>
    <name type="scientific">Mus musculus</name>
    <name type="common">Mouse</name>
    <dbReference type="NCBI Taxonomy" id="10090"/>
    <lineage>
        <taxon>Eukaryota</taxon>
        <taxon>Metazoa</taxon>
        <taxon>Chordata</taxon>
        <taxon>Craniata</taxon>
        <taxon>Vertebrata</taxon>
        <taxon>Euteleostomi</taxon>
        <taxon>Mammalia</taxon>
        <taxon>Eutheria</taxon>
        <taxon>Euarchontoglires</taxon>
        <taxon>Glires</taxon>
        <taxon>Rodentia</taxon>
        <taxon>Myomorpha</taxon>
        <taxon>Muroidea</taxon>
        <taxon>Muridae</taxon>
        <taxon>Murinae</taxon>
        <taxon>Mus</taxon>
        <taxon>Mus</taxon>
    </lineage>
</organism>